<feature type="chain" id="PRO_0000258613" description="HTH-type transcriptional regulator ArgP">
    <location>
        <begin position="1"/>
        <end position="297"/>
    </location>
</feature>
<feature type="domain" description="HTH lysR-type" evidence="1">
    <location>
        <begin position="4"/>
        <end position="60"/>
    </location>
</feature>
<feature type="DNA-binding region" description="H-T-H motif" evidence="1">
    <location>
        <begin position="21"/>
        <end position="40"/>
    </location>
</feature>
<evidence type="ECO:0000255" key="1">
    <source>
        <dbReference type="HAMAP-Rule" id="MF_00513"/>
    </source>
</evidence>
<evidence type="ECO:0000305" key="2"/>
<protein>
    <recommendedName>
        <fullName evidence="1">HTH-type transcriptional regulator ArgP</fullName>
    </recommendedName>
</protein>
<name>ARGP_SALPA</name>
<sequence>MKRPDYRTLQALDAVIRERGFERAAQKLCITQSAVSQRIKQLENMFGQPLLVRTVPPRPTEQGQKLLALLRQVELLEEEWLGDEQTGSTPLLLSLAVNADSLATWLLPALAPVLADSPIRLNLQVEDETRTQERLRRGEVVGAVSIQHQALPSCLVDKLGALDYLFVASKPFAERYFPNGVTRSSLLKAPAVAFDHLDDMHQAFLQQNFDLPPGSVPCHIVNSSEAFVQLARQGTTCCMIPHLQIEKELESGELINLTPGLLQRRMLYWHRFAPESRMMRKVTDALLEYGHKVLRQD</sequence>
<proteinExistence type="inferred from homology"/>
<comment type="function">
    <text evidence="1">Controls the transcription of genes involved in arginine and lysine metabolism.</text>
</comment>
<comment type="subunit">
    <text evidence="1">Homodimer.</text>
</comment>
<comment type="similarity">
    <text evidence="2">Belongs to the LysR transcriptional regulatory family.</text>
</comment>
<dbReference type="EMBL" id="CP000026">
    <property type="protein sequence ID" value="AAV78773.1"/>
    <property type="molecule type" value="Genomic_DNA"/>
</dbReference>
<dbReference type="RefSeq" id="WP_000828345.1">
    <property type="nucleotide sequence ID" value="NC_006511.1"/>
</dbReference>
<dbReference type="SMR" id="Q5PJH0"/>
<dbReference type="GeneID" id="66757362"/>
<dbReference type="KEGG" id="spt:SPA2935"/>
<dbReference type="HOGENOM" id="CLU_063829_0_0_6"/>
<dbReference type="Proteomes" id="UP000008185">
    <property type="component" value="Chromosome"/>
</dbReference>
<dbReference type="GO" id="GO:0003677">
    <property type="term" value="F:DNA binding"/>
    <property type="evidence" value="ECO:0007669"/>
    <property type="project" value="UniProtKB-UniRule"/>
</dbReference>
<dbReference type="GO" id="GO:0003700">
    <property type="term" value="F:DNA-binding transcription factor activity"/>
    <property type="evidence" value="ECO:0007669"/>
    <property type="project" value="UniProtKB-UniRule"/>
</dbReference>
<dbReference type="CDD" id="cd08428">
    <property type="entry name" value="PBP2_IciA_ArgP"/>
    <property type="match status" value="1"/>
</dbReference>
<dbReference type="FunFam" id="1.10.10.10:FF:000061">
    <property type="entry name" value="HTH-type transcriptional regulator ArgP"/>
    <property type="match status" value="1"/>
</dbReference>
<dbReference type="FunFam" id="3.40.190.290:FF:000002">
    <property type="entry name" value="HTH-type transcriptional regulator ArgP"/>
    <property type="match status" value="1"/>
</dbReference>
<dbReference type="Gene3D" id="3.40.190.290">
    <property type="match status" value="1"/>
</dbReference>
<dbReference type="Gene3D" id="1.10.10.10">
    <property type="entry name" value="Winged helix-like DNA-binding domain superfamily/Winged helix DNA-binding domain"/>
    <property type="match status" value="1"/>
</dbReference>
<dbReference type="HAMAP" id="MF_00513">
    <property type="entry name" value="HTH_type_ArgP"/>
    <property type="match status" value="1"/>
</dbReference>
<dbReference type="InterPro" id="IPR017685">
    <property type="entry name" value="ArgP"/>
</dbReference>
<dbReference type="InterPro" id="IPR023490">
    <property type="entry name" value="ArgP_gammaproteobact"/>
</dbReference>
<dbReference type="InterPro" id="IPR050176">
    <property type="entry name" value="LTTR"/>
</dbReference>
<dbReference type="InterPro" id="IPR005119">
    <property type="entry name" value="LysR_subst-bd"/>
</dbReference>
<dbReference type="InterPro" id="IPR000847">
    <property type="entry name" value="Tscrpt_reg_HTH_LysR"/>
</dbReference>
<dbReference type="InterPro" id="IPR036388">
    <property type="entry name" value="WH-like_DNA-bd_sf"/>
</dbReference>
<dbReference type="InterPro" id="IPR036390">
    <property type="entry name" value="WH_DNA-bd_sf"/>
</dbReference>
<dbReference type="NCBIfam" id="TIGR03298">
    <property type="entry name" value="argP"/>
    <property type="match status" value="1"/>
</dbReference>
<dbReference type="NCBIfam" id="NF002964">
    <property type="entry name" value="PRK03635.1"/>
    <property type="match status" value="1"/>
</dbReference>
<dbReference type="NCBIfam" id="NF009888">
    <property type="entry name" value="PRK13348.1"/>
    <property type="match status" value="1"/>
</dbReference>
<dbReference type="PANTHER" id="PTHR30579:SF2">
    <property type="entry name" value="HTH-TYPE TRANSCRIPTIONAL REGULATOR ARGP"/>
    <property type="match status" value="1"/>
</dbReference>
<dbReference type="PANTHER" id="PTHR30579">
    <property type="entry name" value="TRANSCRIPTIONAL REGULATOR"/>
    <property type="match status" value="1"/>
</dbReference>
<dbReference type="Pfam" id="PF00126">
    <property type="entry name" value="HTH_1"/>
    <property type="match status" value="1"/>
</dbReference>
<dbReference type="Pfam" id="PF03466">
    <property type="entry name" value="LysR_substrate"/>
    <property type="match status" value="1"/>
</dbReference>
<dbReference type="PRINTS" id="PR00039">
    <property type="entry name" value="HTHLYSR"/>
</dbReference>
<dbReference type="SUPFAM" id="SSF53850">
    <property type="entry name" value="Periplasmic binding protein-like II"/>
    <property type="match status" value="1"/>
</dbReference>
<dbReference type="SUPFAM" id="SSF46785">
    <property type="entry name" value="Winged helix' DNA-binding domain"/>
    <property type="match status" value="1"/>
</dbReference>
<dbReference type="PROSITE" id="PS50931">
    <property type="entry name" value="HTH_LYSR"/>
    <property type="match status" value="1"/>
</dbReference>
<gene>
    <name evidence="1" type="primary">argP</name>
    <name type="synonym">iciA</name>
    <name type="ordered locus">SPA2935</name>
</gene>
<accession>Q5PJH0</accession>
<reference key="1">
    <citation type="journal article" date="2004" name="Nat. Genet.">
        <title>Comparison of genome degradation in Paratyphi A and Typhi, human-restricted serovars of Salmonella enterica that cause typhoid.</title>
        <authorList>
            <person name="McClelland M."/>
            <person name="Sanderson K.E."/>
            <person name="Clifton S.W."/>
            <person name="Latreille P."/>
            <person name="Porwollik S."/>
            <person name="Sabo A."/>
            <person name="Meyer R."/>
            <person name="Bieri T."/>
            <person name="Ozersky P."/>
            <person name="McLellan M."/>
            <person name="Harkins C.R."/>
            <person name="Wang C."/>
            <person name="Nguyen C."/>
            <person name="Berghoff A."/>
            <person name="Elliott G."/>
            <person name="Kohlberg S."/>
            <person name="Strong C."/>
            <person name="Du F."/>
            <person name="Carter J."/>
            <person name="Kremizki C."/>
            <person name="Layman D."/>
            <person name="Leonard S."/>
            <person name="Sun H."/>
            <person name="Fulton L."/>
            <person name="Nash W."/>
            <person name="Miner T."/>
            <person name="Minx P."/>
            <person name="Delehaunty K."/>
            <person name="Fronick C."/>
            <person name="Magrini V."/>
            <person name="Nhan M."/>
            <person name="Warren W."/>
            <person name="Florea L."/>
            <person name="Spieth J."/>
            <person name="Wilson R.K."/>
        </authorList>
    </citation>
    <scope>NUCLEOTIDE SEQUENCE [LARGE SCALE GENOMIC DNA]</scope>
    <source>
        <strain>ATCC 9150 / SARB42</strain>
    </source>
</reference>
<organism>
    <name type="scientific">Salmonella paratyphi A (strain ATCC 9150 / SARB42)</name>
    <dbReference type="NCBI Taxonomy" id="295319"/>
    <lineage>
        <taxon>Bacteria</taxon>
        <taxon>Pseudomonadati</taxon>
        <taxon>Pseudomonadota</taxon>
        <taxon>Gammaproteobacteria</taxon>
        <taxon>Enterobacterales</taxon>
        <taxon>Enterobacteriaceae</taxon>
        <taxon>Salmonella</taxon>
    </lineage>
</organism>
<keyword id="KW-0238">DNA-binding</keyword>
<keyword id="KW-0804">Transcription</keyword>
<keyword id="KW-0805">Transcription regulation</keyword>